<gene>
    <name evidence="1" type="primary">frsA</name>
    <name type="ordered locus">UTI89_C0280</name>
</gene>
<comment type="function">
    <text evidence="1">Catalyzes the hydrolysis of esters.</text>
</comment>
<comment type="catalytic activity">
    <reaction evidence="1">
        <text>a carboxylic ester + H2O = an alcohol + a carboxylate + H(+)</text>
        <dbReference type="Rhea" id="RHEA:21164"/>
        <dbReference type="ChEBI" id="CHEBI:15377"/>
        <dbReference type="ChEBI" id="CHEBI:15378"/>
        <dbReference type="ChEBI" id="CHEBI:29067"/>
        <dbReference type="ChEBI" id="CHEBI:30879"/>
        <dbReference type="ChEBI" id="CHEBI:33308"/>
        <dbReference type="EC" id="3.1.1.1"/>
    </reaction>
</comment>
<comment type="similarity">
    <text evidence="1">Belongs to the FrsA family.</text>
</comment>
<dbReference type="EC" id="3.1.1.1" evidence="1"/>
<dbReference type="EMBL" id="CP000243">
    <property type="protein sequence ID" value="ABE05783.1"/>
    <property type="molecule type" value="Genomic_DNA"/>
</dbReference>
<dbReference type="RefSeq" id="WP_000189577.1">
    <property type="nucleotide sequence ID" value="NZ_CP064825.1"/>
</dbReference>
<dbReference type="SMR" id="Q1RFT1"/>
<dbReference type="ESTHER" id="ecoli-yafa">
    <property type="family name" value="Duf_1100-R"/>
</dbReference>
<dbReference type="KEGG" id="eci:UTI89_C0280"/>
<dbReference type="HOGENOM" id="CLU_036819_0_0_6"/>
<dbReference type="Proteomes" id="UP000001952">
    <property type="component" value="Chromosome"/>
</dbReference>
<dbReference type="GO" id="GO:0106435">
    <property type="term" value="F:carboxylesterase activity"/>
    <property type="evidence" value="ECO:0007669"/>
    <property type="project" value="UniProtKB-EC"/>
</dbReference>
<dbReference type="FunFam" id="3.40.50.1820:FF:000022">
    <property type="entry name" value="Esterase FrsA"/>
    <property type="match status" value="1"/>
</dbReference>
<dbReference type="Gene3D" id="3.40.50.1820">
    <property type="entry name" value="alpha/beta hydrolase"/>
    <property type="match status" value="1"/>
</dbReference>
<dbReference type="HAMAP" id="MF_01063">
    <property type="entry name" value="FrsA"/>
    <property type="match status" value="1"/>
</dbReference>
<dbReference type="InterPro" id="IPR029058">
    <property type="entry name" value="AB_hydrolase_fold"/>
</dbReference>
<dbReference type="InterPro" id="IPR043423">
    <property type="entry name" value="FrsA"/>
</dbReference>
<dbReference type="InterPro" id="IPR010520">
    <property type="entry name" value="FrsA-like"/>
</dbReference>
<dbReference type="InterPro" id="IPR050261">
    <property type="entry name" value="FrsA_esterase"/>
</dbReference>
<dbReference type="NCBIfam" id="NF003460">
    <property type="entry name" value="PRK05077.1"/>
    <property type="match status" value="1"/>
</dbReference>
<dbReference type="PANTHER" id="PTHR22946">
    <property type="entry name" value="DIENELACTONE HYDROLASE DOMAIN-CONTAINING PROTEIN-RELATED"/>
    <property type="match status" value="1"/>
</dbReference>
<dbReference type="PANTHER" id="PTHR22946:SF4">
    <property type="entry name" value="ESTERASE FRSA"/>
    <property type="match status" value="1"/>
</dbReference>
<dbReference type="Pfam" id="PF06500">
    <property type="entry name" value="FrsA-like"/>
    <property type="match status" value="1"/>
</dbReference>
<dbReference type="SUPFAM" id="SSF53474">
    <property type="entry name" value="alpha/beta-Hydrolases"/>
    <property type="match status" value="1"/>
</dbReference>
<proteinExistence type="inferred from homology"/>
<keyword id="KW-0378">Hydrolase</keyword>
<keyword id="KW-0719">Serine esterase</keyword>
<name>FRSA_ECOUT</name>
<accession>Q1RFT1</accession>
<organism>
    <name type="scientific">Escherichia coli (strain UTI89 / UPEC)</name>
    <dbReference type="NCBI Taxonomy" id="364106"/>
    <lineage>
        <taxon>Bacteria</taxon>
        <taxon>Pseudomonadati</taxon>
        <taxon>Pseudomonadota</taxon>
        <taxon>Gammaproteobacteria</taxon>
        <taxon>Enterobacterales</taxon>
        <taxon>Enterobacteriaceae</taxon>
        <taxon>Escherichia</taxon>
    </lineage>
</organism>
<protein>
    <recommendedName>
        <fullName evidence="1">Esterase FrsA</fullName>
        <ecNumber evidence="1">3.1.1.1</ecNumber>
    </recommendedName>
</protein>
<evidence type="ECO:0000255" key="1">
    <source>
        <dbReference type="HAMAP-Rule" id="MF_01063"/>
    </source>
</evidence>
<sequence length="414" mass="46996">MTQANLSETLFKPRFKHPETSTLVRRFSHGAQPPVQSALDGKTIPHWYRMINRLMWIWRGIDPREILDVQARIVMSDAERTDDDLYDTVIGYRGGNWIYEWATQAMVWQQKACAEEDPQLSGRHWLHAATLYNIAAYPHLKGDDLAEQAQALSNRAYEEAAQRLPGTMRQMEFTVPGGAPITGFLHMPKGDGPFPTVLMCGGLDAMQTDYYSLYERYFAPRGIAMLTIDMPSVGFSSKWKLTQDSSLLHQHVLKALPNVPWVDHTRVAAFGFRFGANVAVRLAYLESPRLKAVACLGPVVHTLLSDFKCQQQVPEMYLDVLASRLGMHDASDEALRVELNRYSLKVQGLLGRRCPTPMLSGYWKNDPFSPEEDSRLITSSSADGKLLEIPFNPVYRNFDKGLQEITDWIEKRLC</sequence>
<reference key="1">
    <citation type="journal article" date="2006" name="Proc. Natl. Acad. Sci. U.S.A.">
        <title>Identification of genes subject to positive selection in uropathogenic strains of Escherichia coli: a comparative genomics approach.</title>
        <authorList>
            <person name="Chen S.L."/>
            <person name="Hung C.-S."/>
            <person name="Xu J."/>
            <person name="Reigstad C.S."/>
            <person name="Magrini V."/>
            <person name="Sabo A."/>
            <person name="Blasiar D."/>
            <person name="Bieri T."/>
            <person name="Meyer R.R."/>
            <person name="Ozersky P."/>
            <person name="Armstrong J.R."/>
            <person name="Fulton R.S."/>
            <person name="Latreille J.P."/>
            <person name="Spieth J."/>
            <person name="Hooton T.M."/>
            <person name="Mardis E.R."/>
            <person name="Hultgren S.J."/>
            <person name="Gordon J.I."/>
        </authorList>
    </citation>
    <scope>NUCLEOTIDE SEQUENCE [LARGE SCALE GENOMIC DNA]</scope>
    <source>
        <strain>UTI89 / UPEC</strain>
    </source>
</reference>
<feature type="chain" id="PRO_1000064481" description="Esterase FrsA">
    <location>
        <begin position="1"/>
        <end position="414"/>
    </location>
</feature>